<name>RUVA_SHEPW</name>
<keyword id="KW-0963">Cytoplasm</keyword>
<keyword id="KW-0227">DNA damage</keyword>
<keyword id="KW-0233">DNA recombination</keyword>
<keyword id="KW-0234">DNA repair</keyword>
<keyword id="KW-0238">DNA-binding</keyword>
<feature type="chain" id="PRO_1000195177" description="Holliday junction branch migration complex subunit RuvA">
    <location>
        <begin position="1"/>
        <end position="205"/>
    </location>
</feature>
<feature type="region of interest" description="Domain I" evidence="1">
    <location>
        <begin position="1"/>
        <end position="64"/>
    </location>
</feature>
<feature type="region of interest" description="Domain II" evidence="1">
    <location>
        <begin position="65"/>
        <end position="143"/>
    </location>
</feature>
<feature type="region of interest" description="Flexible linker" evidence="1">
    <location>
        <begin position="144"/>
        <end position="156"/>
    </location>
</feature>
<feature type="region of interest" description="Domain III" evidence="1">
    <location>
        <begin position="157"/>
        <end position="205"/>
    </location>
</feature>
<reference key="1">
    <citation type="journal article" date="2008" name="PLoS ONE">
        <title>Environmental adaptation: genomic analysis of the piezotolerant and psychrotolerant deep-sea iron reducing bacterium Shewanella piezotolerans WP3.</title>
        <authorList>
            <person name="Wang F."/>
            <person name="Wang J."/>
            <person name="Jian H."/>
            <person name="Zhang B."/>
            <person name="Li S."/>
            <person name="Wang F."/>
            <person name="Zeng X."/>
            <person name="Gao L."/>
            <person name="Bartlett D.H."/>
            <person name="Yu J."/>
            <person name="Hu S."/>
            <person name="Xiao X."/>
        </authorList>
    </citation>
    <scope>NUCLEOTIDE SEQUENCE [LARGE SCALE GENOMIC DNA]</scope>
    <source>
        <strain>WP3 / JCM 13877</strain>
    </source>
</reference>
<accession>B8CNY0</accession>
<dbReference type="EMBL" id="CP000472">
    <property type="protein sequence ID" value="ACJ29099.1"/>
    <property type="molecule type" value="Genomic_DNA"/>
</dbReference>
<dbReference type="RefSeq" id="WP_020912459.1">
    <property type="nucleotide sequence ID" value="NC_011566.1"/>
</dbReference>
<dbReference type="SMR" id="B8CNY0"/>
<dbReference type="STRING" id="225849.swp_2354"/>
<dbReference type="KEGG" id="swp:swp_2354"/>
<dbReference type="eggNOG" id="COG0632">
    <property type="taxonomic scope" value="Bacteria"/>
</dbReference>
<dbReference type="HOGENOM" id="CLU_087936_0_0_6"/>
<dbReference type="OrthoDB" id="5293449at2"/>
<dbReference type="Proteomes" id="UP000000753">
    <property type="component" value="Chromosome"/>
</dbReference>
<dbReference type="GO" id="GO:0005737">
    <property type="term" value="C:cytoplasm"/>
    <property type="evidence" value="ECO:0007669"/>
    <property type="project" value="UniProtKB-SubCell"/>
</dbReference>
<dbReference type="GO" id="GO:0009379">
    <property type="term" value="C:Holliday junction helicase complex"/>
    <property type="evidence" value="ECO:0007669"/>
    <property type="project" value="InterPro"/>
</dbReference>
<dbReference type="GO" id="GO:0048476">
    <property type="term" value="C:Holliday junction resolvase complex"/>
    <property type="evidence" value="ECO:0007669"/>
    <property type="project" value="UniProtKB-UniRule"/>
</dbReference>
<dbReference type="GO" id="GO:0005524">
    <property type="term" value="F:ATP binding"/>
    <property type="evidence" value="ECO:0007669"/>
    <property type="project" value="InterPro"/>
</dbReference>
<dbReference type="GO" id="GO:0000400">
    <property type="term" value="F:four-way junction DNA binding"/>
    <property type="evidence" value="ECO:0007669"/>
    <property type="project" value="UniProtKB-UniRule"/>
</dbReference>
<dbReference type="GO" id="GO:0009378">
    <property type="term" value="F:four-way junction helicase activity"/>
    <property type="evidence" value="ECO:0007669"/>
    <property type="project" value="InterPro"/>
</dbReference>
<dbReference type="GO" id="GO:0006310">
    <property type="term" value="P:DNA recombination"/>
    <property type="evidence" value="ECO:0007669"/>
    <property type="project" value="UniProtKB-UniRule"/>
</dbReference>
<dbReference type="GO" id="GO:0006281">
    <property type="term" value="P:DNA repair"/>
    <property type="evidence" value="ECO:0007669"/>
    <property type="project" value="UniProtKB-UniRule"/>
</dbReference>
<dbReference type="CDD" id="cd14332">
    <property type="entry name" value="UBA_RuvA_C"/>
    <property type="match status" value="1"/>
</dbReference>
<dbReference type="FunFam" id="2.40.50.140:FF:000083">
    <property type="entry name" value="Holliday junction ATP-dependent DNA helicase RuvA"/>
    <property type="match status" value="1"/>
</dbReference>
<dbReference type="Gene3D" id="1.10.150.20">
    <property type="entry name" value="5' to 3' exonuclease, C-terminal subdomain"/>
    <property type="match status" value="1"/>
</dbReference>
<dbReference type="Gene3D" id="1.10.8.10">
    <property type="entry name" value="DNA helicase RuvA subunit, C-terminal domain"/>
    <property type="match status" value="1"/>
</dbReference>
<dbReference type="Gene3D" id="2.40.50.140">
    <property type="entry name" value="Nucleic acid-binding proteins"/>
    <property type="match status" value="1"/>
</dbReference>
<dbReference type="HAMAP" id="MF_00031">
    <property type="entry name" value="DNA_HJ_migration_RuvA"/>
    <property type="match status" value="1"/>
</dbReference>
<dbReference type="InterPro" id="IPR013849">
    <property type="entry name" value="DNA_helicase_Holl-junc_RuvA_I"/>
</dbReference>
<dbReference type="InterPro" id="IPR003583">
    <property type="entry name" value="Hlx-hairpin-Hlx_DNA-bd_motif"/>
</dbReference>
<dbReference type="InterPro" id="IPR012340">
    <property type="entry name" value="NA-bd_OB-fold"/>
</dbReference>
<dbReference type="InterPro" id="IPR000085">
    <property type="entry name" value="RuvA"/>
</dbReference>
<dbReference type="InterPro" id="IPR010994">
    <property type="entry name" value="RuvA_2-like"/>
</dbReference>
<dbReference type="InterPro" id="IPR011114">
    <property type="entry name" value="RuvA_C"/>
</dbReference>
<dbReference type="InterPro" id="IPR036267">
    <property type="entry name" value="RuvA_C_sf"/>
</dbReference>
<dbReference type="NCBIfam" id="TIGR00084">
    <property type="entry name" value="ruvA"/>
    <property type="match status" value="1"/>
</dbReference>
<dbReference type="Pfam" id="PF14520">
    <property type="entry name" value="HHH_5"/>
    <property type="match status" value="1"/>
</dbReference>
<dbReference type="Pfam" id="PF07499">
    <property type="entry name" value="RuvA_C"/>
    <property type="match status" value="1"/>
</dbReference>
<dbReference type="Pfam" id="PF01330">
    <property type="entry name" value="RuvA_N"/>
    <property type="match status" value="1"/>
</dbReference>
<dbReference type="SMART" id="SM00278">
    <property type="entry name" value="HhH1"/>
    <property type="match status" value="2"/>
</dbReference>
<dbReference type="SUPFAM" id="SSF46929">
    <property type="entry name" value="DNA helicase RuvA subunit, C-terminal domain"/>
    <property type="match status" value="1"/>
</dbReference>
<dbReference type="SUPFAM" id="SSF50249">
    <property type="entry name" value="Nucleic acid-binding proteins"/>
    <property type="match status" value="1"/>
</dbReference>
<dbReference type="SUPFAM" id="SSF47781">
    <property type="entry name" value="RuvA domain 2-like"/>
    <property type="match status" value="1"/>
</dbReference>
<protein>
    <recommendedName>
        <fullName evidence="1">Holliday junction branch migration complex subunit RuvA</fullName>
    </recommendedName>
</protein>
<organism>
    <name type="scientific">Shewanella piezotolerans (strain WP3 / JCM 13877)</name>
    <dbReference type="NCBI Taxonomy" id="225849"/>
    <lineage>
        <taxon>Bacteria</taxon>
        <taxon>Pseudomonadati</taxon>
        <taxon>Pseudomonadota</taxon>
        <taxon>Gammaproteobacteria</taxon>
        <taxon>Alteromonadales</taxon>
        <taxon>Shewanellaceae</taxon>
        <taxon>Shewanella</taxon>
    </lineage>
</organism>
<comment type="function">
    <text evidence="1">The RuvA-RuvB-RuvC complex processes Holliday junction (HJ) DNA during genetic recombination and DNA repair, while the RuvA-RuvB complex plays an important role in the rescue of blocked DNA replication forks via replication fork reversal (RFR). RuvA specifically binds to HJ cruciform DNA, conferring on it an open structure. The RuvB hexamer acts as an ATP-dependent pump, pulling dsDNA into and through the RuvAB complex. HJ branch migration allows RuvC to scan DNA until it finds its consensus sequence, where it cleaves and resolves the cruciform DNA.</text>
</comment>
<comment type="subunit">
    <text evidence="1">Homotetramer. Forms an RuvA(8)-RuvB(12)-Holliday junction (HJ) complex. HJ DNA is sandwiched between 2 RuvA tetramers; dsDNA enters through RuvA and exits via RuvB. An RuvB hexamer assembles on each DNA strand where it exits the tetramer. Each RuvB hexamer is contacted by two RuvA subunits (via domain III) on 2 adjacent RuvB subunits; this complex drives branch migration. In the full resolvosome a probable DNA-RuvA(4)-RuvB(12)-RuvC(2) complex forms which resolves the HJ.</text>
</comment>
<comment type="subcellular location">
    <subcellularLocation>
        <location evidence="1">Cytoplasm</location>
    </subcellularLocation>
</comment>
<comment type="domain">
    <text evidence="1">Has three domains with a flexible linker between the domains II and III and assumes an 'L' shape. Domain III is highly mobile and contacts RuvB.</text>
</comment>
<comment type="similarity">
    <text evidence="1">Belongs to the RuvA family.</text>
</comment>
<evidence type="ECO:0000255" key="1">
    <source>
        <dbReference type="HAMAP-Rule" id="MF_00031"/>
    </source>
</evidence>
<proteinExistence type="inferred from homology"/>
<sequence>MIGRIRGLLVEKQAPEVLIDVSGVGYEIQMPLTSFYELPEIGLEAVVFTHFVVREDAQLLYGFISKQERALFRLLIKTNGVGPKLALTILSGMTAGEFVACVERDDIATLVKLPGVGKKTAERLLVEMRDKLKSLMEASVGSEREFMLQSNYTAPVVANTAEEDAIAALLSLGYKPAQASKAVSAVYVDGIDSESLIKSALKSML</sequence>
<gene>
    <name evidence="1" type="primary">ruvA</name>
    <name type="ordered locus">swp_2354</name>
</gene>